<reference key="1">
    <citation type="submission" date="2008-02" db="EMBL/GenBank/DDBJ databases">
        <title>Complete sequence of Pseudomonas putida W619.</title>
        <authorList>
            <person name="Copeland A."/>
            <person name="Lucas S."/>
            <person name="Lapidus A."/>
            <person name="Barry K."/>
            <person name="Detter J.C."/>
            <person name="Glavina del Rio T."/>
            <person name="Dalin E."/>
            <person name="Tice H."/>
            <person name="Pitluck S."/>
            <person name="Chain P."/>
            <person name="Malfatti S."/>
            <person name="Shin M."/>
            <person name="Vergez L."/>
            <person name="Schmutz J."/>
            <person name="Larimer F."/>
            <person name="Land M."/>
            <person name="Hauser L."/>
            <person name="Kyrpides N."/>
            <person name="Kim E."/>
            <person name="Taghavi S."/>
            <person name="Vangronsveld D."/>
            <person name="van der Lelie D."/>
            <person name="Richardson P."/>
        </authorList>
    </citation>
    <scope>NUCLEOTIDE SEQUENCE [LARGE SCALE GENOMIC DNA]</scope>
    <source>
        <strain>W619</strain>
    </source>
</reference>
<protein>
    <recommendedName>
        <fullName evidence="1">Biosynthetic peptidoglycan transglycosylase</fullName>
        <ecNumber evidence="1">2.4.99.28</ecNumber>
    </recommendedName>
    <alternativeName>
        <fullName evidence="1">Glycan polymerase</fullName>
    </alternativeName>
    <alternativeName>
        <fullName evidence="1">Peptidoglycan glycosyltransferase MtgA</fullName>
        <shortName evidence="1">PGT</shortName>
    </alternativeName>
</protein>
<sequence>MLSSLLRRLARALFWFAAGSIVLVLVFRWVPPPGTALMVERKVQSWVSGEPIDLQRDWQPWESISDDLKVAVIAGEDQKFANHWGFDIPAIQAALAYNERGGNIRGASTLTQQVAKNLFLWSGRSWLRKGLEAWFTALIELFWSKERILEVYLNSAEWGKGVFGAQAAARYHFGIDASRLSRQQAAQLAAVLPSPIKWSASRPSAYVASRAGWIRRQMSQLGGPSYLMQLDASRRP</sequence>
<feature type="chain" id="PRO_1000133599" description="Biosynthetic peptidoglycan transglycosylase">
    <location>
        <begin position="1"/>
        <end position="236"/>
    </location>
</feature>
<feature type="transmembrane region" description="Helical" evidence="1">
    <location>
        <begin position="12"/>
        <end position="31"/>
    </location>
</feature>
<keyword id="KW-0997">Cell inner membrane</keyword>
<keyword id="KW-1003">Cell membrane</keyword>
<keyword id="KW-0133">Cell shape</keyword>
<keyword id="KW-0961">Cell wall biogenesis/degradation</keyword>
<keyword id="KW-0328">Glycosyltransferase</keyword>
<keyword id="KW-0472">Membrane</keyword>
<keyword id="KW-0573">Peptidoglycan synthesis</keyword>
<keyword id="KW-0808">Transferase</keyword>
<keyword id="KW-0812">Transmembrane</keyword>
<keyword id="KW-1133">Transmembrane helix</keyword>
<dbReference type="EC" id="2.4.99.28" evidence="1"/>
<dbReference type="EMBL" id="CP000949">
    <property type="protein sequence ID" value="ACA70864.1"/>
    <property type="molecule type" value="Genomic_DNA"/>
</dbReference>
<dbReference type="SMR" id="B1J2G5"/>
<dbReference type="STRING" id="390235.PputW619_0358"/>
<dbReference type="CAZy" id="GT51">
    <property type="family name" value="Glycosyltransferase Family 51"/>
</dbReference>
<dbReference type="KEGG" id="ppw:PputW619_0358"/>
<dbReference type="eggNOG" id="COG0744">
    <property type="taxonomic scope" value="Bacteria"/>
</dbReference>
<dbReference type="HOGENOM" id="CLU_006354_1_1_6"/>
<dbReference type="OrthoDB" id="9766909at2"/>
<dbReference type="UniPathway" id="UPA00219"/>
<dbReference type="GO" id="GO:0009274">
    <property type="term" value="C:peptidoglycan-based cell wall"/>
    <property type="evidence" value="ECO:0007669"/>
    <property type="project" value="InterPro"/>
</dbReference>
<dbReference type="GO" id="GO:0005886">
    <property type="term" value="C:plasma membrane"/>
    <property type="evidence" value="ECO:0007669"/>
    <property type="project" value="UniProtKB-SubCell"/>
</dbReference>
<dbReference type="GO" id="GO:0016763">
    <property type="term" value="F:pentosyltransferase activity"/>
    <property type="evidence" value="ECO:0007669"/>
    <property type="project" value="InterPro"/>
</dbReference>
<dbReference type="GO" id="GO:0008955">
    <property type="term" value="F:peptidoglycan glycosyltransferase activity"/>
    <property type="evidence" value="ECO:0007669"/>
    <property type="project" value="UniProtKB-UniRule"/>
</dbReference>
<dbReference type="GO" id="GO:0071555">
    <property type="term" value="P:cell wall organization"/>
    <property type="evidence" value="ECO:0007669"/>
    <property type="project" value="UniProtKB-KW"/>
</dbReference>
<dbReference type="GO" id="GO:0009252">
    <property type="term" value="P:peptidoglycan biosynthetic process"/>
    <property type="evidence" value="ECO:0007669"/>
    <property type="project" value="UniProtKB-UniRule"/>
</dbReference>
<dbReference type="GO" id="GO:0008360">
    <property type="term" value="P:regulation of cell shape"/>
    <property type="evidence" value="ECO:0007669"/>
    <property type="project" value="UniProtKB-KW"/>
</dbReference>
<dbReference type="Gene3D" id="1.10.3810.10">
    <property type="entry name" value="Biosynthetic peptidoglycan transglycosylase-like"/>
    <property type="match status" value="1"/>
</dbReference>
<dbReference type="HAMAP" id="MF_00766">
    <property type="entry name" value="PGT_MtgA"/>
    <property type="match status" value="1"/>
</dbReference>
<dbReference type="InterPro" id="IPR001264">
    <property type="entry name" value="Glyco_trans_51"/>
</dbReference>
<dbReference type="InterPro" id="IPR023346">
    <property type="entry name" value="Lysozyme-like_dom_sf"/>
</dbReference>
<dbReference type="InterPro" id="IPR036950">
    <property type="entry name" value="PBP_transglycosylase"/>
</dbReference>
<dbReference type="InterPro" id="IPR011812">
    <property type="entry name" value="Pep_trsgly"/>
</dbReference>
<dbReference type="NCBIfam" id="TIGR02070">
    <property type="entry name" value="mono_pep_trsgly"/>
    <property type="match status" value="1"/>
</dbReference>
<dbReference type="PANTHER" id="PTHR30400:SF0">
    <property type="entry name" value="BIOSYNTHETIC PEPTIDOGLYCAN TRANSGLYCOSYLASE"/>
    <property type="match status" value="1"/>
</dbReference>
<dbReference type="PANTHER" id="PTHR30400">
    <property type="entry name" value="MONOFUNCTIONAL BIOSYNTHETIC PEPTIDOGLYCAN TRANSGLYCOSYLASE"/>
    <property type="match status" value="1"/>
</dbReference>
<dbReference type="Pfam" id="PF00912">
    <property type="entry name" value="Transgly"/>
    <property type="match status" value="1"/>
</dbReference>
<dbReference type="SUPFAM" id="SSF53955">
    <property type="entry name" value="Lysozyme-like"/>
    <property type="match status" value="1"/>
</dbReference>
<comment type="function">
    <text evidence="1">Peptidoglycan polymerase that catalyzes glycan chain elongation from lipid-linked precursors.</text>
</comment>
<comment type="catalytic activity">
    <reaction evidence="1">
        <text>[GlcNAc-(1-&gt;4)-Mur2Ac(oyl-L-Ala-gamma-D-Glu-L-Lys-D-Ala-D-Ala)](n)-di-trans,octa-cis-undecaprenyl diphosphate + beta-D-GlcNAc-(1-&gt;4)-Mur2Ac(oyl-L-Ala-gamma-D-Glu-L-Lys-D-Ala-D-Ala)-di-trans,octa-cis-undecaprenyl diphosphate = [GlcNAc-(1-&gt;4)-Mur2Ac(oyl-L-Ala-gamma-D-Glu-L-Lys-D-Ala-D-Ala)](n+1)-di-trans,octa-cis-undecaprenyl diphosphate + di-trans,octa-cis-undecaprenyl diphosphate + H(+)</text>
        <dbReference type="Rhea" id="RHEA:23708"/>
        <dbReference type="Rhea" id="RHEA-COMP:9602"/>
        <dbReference type="Rhea" id="RHEA-COMP:9603"/>
        <dbReference type="ChEBI" id="CHEBI:15378"/>
        <dbReference type="ChEBI" id="CHEBI:58405"/>
        <dbReference type="ChEBI" id="CHEBI:60033"/>
        <dbReference type="ChEBI" id="CHEBI:78435"/>
        <dbReference type="EC" id="2.4.99.28"/>
    </reaction>
</comment>
<comment type="pathway">
    <text evidence="1">Cell wall biogenesis; peptidoglycan biosynthesis.</text>
</comment>
<comment type="subcellular location">
    <subcellularLocation>
        <location evidence="1">Cell inner membrane</location>
        <topology evidence="1">Single-pass membrane protein</topology>
    </subcellularLocation>
</comment>
<comment type="similarity">
    <text evidence="1">Belongs to the glycosyltransferase 51 family.</text>
</comment>
<proteinExistence type="inferred from homology"/>
<organism>
    <name type="scientific">Pseudomonas putida (strain W619)</name>
    <dbReference type="NCBI Taxonomy" id="390235"/>
    <lineage>
        <taxon>Bacteria</taxon>
        <taxon>Pseudomonadati</taxon>
        <taxon>Pseudomonadota</taxon>
        <taxon>Gammaproteobacteria</taxon>
        <taxon>Pseudomonadales</taxon>
        <taxon>Pseudomonadaceae</taxon>
        <taxon>Pseudomonas</taxon>
    </lineage>
</organism>
<gene>
    <name evidence="1" type="primary">mtgA</name>
    <name type="ordered locus">PputW619_0358</name>
</gene>
<accession>B1J2G5</accession>
<evidence type="ECO:0000255" key="1">
    <source>
        <dbReference type="HAMAP-Rule" id="MF_00766"/>
    </source>
</evidence>
<name>MTGA_PSEPW</name>